<reference key="1">
    <citation type="journal article" date="2005" name="Nature">
        <title>Genome sequencing and analysis of Aspergillus oryzae.</title>
        <authorList>
            <person name="Machida M."/>
            <person name="Asai K."/>
            <person name="Sano M."/>
            <person name="Tanaka T."/>
            <person name="Kumagai T."/>
            <person name="Terai G."/>
            <person name="Kusumoto K."/>
            <person name="Arima T."/>
            <person name="Akita O."/>
            <person name="Kashiwagi Y."/>
            <person name="Abe K."/>
            <person name="Gomi K."/>
            <person name="Horiuchi H."/>
            <person name="Kitamoto K."/>
            <person name="Kobayashi T."/>
            <person name="Takeuchi M."/>
            <person name="Denning D.W."/>
            <person name="Galagan J.E."/>
            <person name="Nierman W.C."/>
            <person name="Yu J."/>
            <person name="Archer D.B."/>
            <person name="Bennett J.W."/>
            <person name="Bhatnagar D."/>
            <person name="Cleveland T.E."/>
            <person name="Fedorova N.D."/>
            <person name="Gotoh O."/>
            <person name="Horikawa H."/>
            <person name="Hosoyama A."/>
            <person name="Ichinomiya M."/>
            <person name="Igarashi R."/>
            <person name="Iwashita K."/>
            <person name="Juvvadi P.R."/>
            <person name="Kato M."/>
            <person name="Kato Y."/>
            <person name="Kin T."/>
            <person name="Kokubun A."/>
            <person name="Maeda H."/>
            <person name="Maeyama N."/>
            <person name="Maruyama J."/>
            <person name="Nagasaki H."/>
            <person name="Nakajima T."/>
            <person name="Oda K."/>
            <person name="Okada K."/>
            <person name="Paulsen I."/>
            <person name="Sakamoto K."/>
            <person name="Sawano T."/>
            <person name="Takahashi M."/>
            <person name="Takase K."/>
            <person name="Terabayashi Y."/>
            <person name="Wortman J.R."/>
            <person name="Yamada O."/>
            <person name="Yamagata Y."/>
            <person name="Anazawa H."/>
            <person name="Hata Y."/>
            <person name="Koide Y."/>
            <person name="Komori T."/>
            <person name="Koyama Y."/>
            <person name="Minetoki T."/>
            <person name="Suharnan S."/>
            <person name="Tanaka A."/>
            <person name="Isono K."/>
            <person name="Kuhara S."/>
            <person name="Ogasawara N."/>
            <person name="Kikuchi H."/>
        </authorList>
    </citation>
    <scope>NUCLEOTIDE SEQUENCE [LARGE SCALE GENOMIC DNA]</scope>
    <source>
        <strain>ATCC 42149 / RIB 40</strain>
    </source>
</reference>
<proteinExistence type="inferred from homology"/>
<keyword id="KW-0175">Coiled coil</keyword>
<keyword id="KW-0256">Endoplasmic reticulum</keyword>
<keyword id="KW-0472">Membrane</keyword>
<keyword id="KW-1185">Reference proteome</keyword>
<keyword id="KW-0812">Transmembrane</keyword>
<keyword id="KW-1133">Transmembrane helix</keyword>
<keyword id="KW-0813">Transport</keyword>
<protein>
    <recommendedName>
        <fullName evidence="1">Protein get1</fullName>
    </recommendedName>
    <alternativeName>
        <fullName evidence="1">Guided entry of tail-anchored proteins 1</fullName>
    </alternativeName>
</protein>
<gene>
    <name type="primary">get1</name>
    <name type="ORF">AO090023000956</name>
</gene>
<feature type="chain" id="PRO_0000388579" description="Protein get1">
    <location>
        <begin position="1"/>
        <end position="196"/>
    </location>
</feature>
<feature type="topological domain" description="Lumenal" evidence="1">
    <location>
        <begin position="1"/>
        <end position="4"/>
    </location>
</feature>
<feature type="transmembrane region" description="Helical" evidence="1">
    <location>
        <begin position="5"/>
        <end position="24"/>
    </location>
</feature>
<feature type="topological domain" description="Cytoplasmic" evidence="1">
    <location>
        <begin position="25"/>
        <end position="110"/>
    </location>
</feature>
<feature type="transmembrane region" description="Helical" evidence="1">
    <location>
        <begin position="111"/>
        <end position="131"/>
    </location>
</feature>
<feature type="topological domain" description="Lumenal" evidence="1">
    <location>
        <begin position="132"/>
        <end position="155"/>
    </location>
</feature>
<feature type="transmembrane region" description="Helical" evidence="1">
    <location>
        <begin position="156"/>
        <end position="172"/>
    </location>
</feature>
<feature type="topological domain" description="Cytoplasmic" evidence="1">
    <location>
        <begin position="173"/>
        <end position="196"/>
    </location>
</feature>
<feature type="coiled-coil region" evidence="1">
    <location>
        <begin position="43"/>
        <end position="100"/>
    </location>
</feature>
<comment type="function">
    <text evidence="1">Required for the post-translational delivery of tail-anchored (TA) proteins to the endoplasmic reticulum. Acts as a membrane receptor for soluble get3, which recognizes and selectively binds the transmembrane domain of TA proteins in the cytosol.</text>
</comment>
<comment type="subunit">
    <text evidence="1">Interacts with get3.</text>
</comment>
<comment type="subcellular location">
    <subcellularLocation>
        <location evidence="1">Endoplasmic reticulum membrane</location>
        <topology evidence="1">Multi-pass membrane protein</topology>
    </subcellularLocation>
</comment>
<comment type="similarity">
    <text evidence="1">Belongs to the WRB/GET1 family.</text>
</comment>
<name>GET1_ASPOR</name>
<sequence>MLSLIWTIFFLHVAIYVVNTAGASTIDSLLWLLYLKLPTSTSKNAREQSRLKREALELKRDMNNTSSQDEFAKWAKLRRRHDKTMDEYEQLNKTLTAQKSSFDWSVKIARWLSTNGLKIFLQFWYSKTPVFALPEAWIPYYVQWILSFPRAPMGSVSVHVWNSVCATAVSVTAEMVTSMFLQTARPTPVATAQKTQ</sequence>
<evidence type="ECO:0000255" key="1">
    <source>
        <dbReference type="HAMAP-Rule" id="MF_03113"/>
    </source>
</evidence>
<organism>
    <name type="scientific">Aspergillus oryzae (strain ATCC 42149 / RIB 40)</name>
    <name type="common">Yellow koji mold</name>
    <dbReference type="NCBI Taxonomy" id="510516"/>
    <lineage>
        <taxon>Eukaryota</taxon>
        <taxon>Fungi</taxon>
        <taxon>Dikarya</taxon>
        <taxon>Ascomycota</taxon>
        <taxon>Pezizomycotina</taxon>
        <taxon>Eurotiomycetes</taxon>
        <taxon>Eurotiomycetidae</taxon>
        <taxon>Eurotiales</taxon>
        <taxon>Aspergillaceae</taxon>
        <taxon>Aspergillus</taxon>
        <taxon>Aspergillus subgen. Circumdati</taxon>
    </lineage>
</organism>
<dbReference type="EMBL" id="BA000051">
    <property type="protein sequence ID" value="BAE59445.1"/>
    <property type="molecule type" value="Genomic_DNA"/>
</dbReference>
<dbReference type="RefSeq" id="XP_001821447.1">
    <property type="nucleotide sequence ID" value="XM_001821395.2"/>
</dbReference>
<dbReference type="SMR" id="Q2UG70"/>
<dbReference type="STRING" id="510516.Q2UG70"/>
<dbReference type="EnsemblFungi" id="BAE59445">
    <property type="protein sequence ID" value="BAE59445"/>
    <property type="gene ID" value="AO090023000956"/>
</dbReference>
<dbReference type="GeneID" id="5993449"/>
<dbReference type="KEGG" id="aor:AO090023000956"/>
<dbReference type="VEuPathDB" id="FungiDB:AO090023000956"/>
<dbReference type="HOGENOM" id="CLU_089418_1_0_1"/>
<dbReference type="OMA" id="AEWIISF"/>
<dbReference type="OrthoDB" id="73395at5052"/>
<dbReference type="Proteomes" id="UP000006564">
    <property type="component" value="Chromosome 3"/>
</dbReference>
<dbReference type="GO" id="GO:0005789">
    <property type="term" value="C:endoplasmic reticulum membrane"/>
    <property type="evidence" value="ECO:0007669"/>
    <property type="project" value="UniProtKB-SubCell"/>
</dbReference>
<dbReference type="GO" id="GO:0043529">
    <property type="term" value="C:GET complex"/>
    <property type="evidence" value="ECO:0007669"/>
    <property type="project" value="InterPro"/>
</dbReference>
<dbReference type="GO" id="GO:0043495">
    <property type="term" value="F:protein-membrane adaptor activity"/>
    <property type="evidence" value="ECO:0007669"/>
    <property type="project" value="TreeGrafter"/>
</dbReference>
<dbReference type="GO" id="GO:0071816">
    <property type="term" value="P:tail-anchored membrane protein insertion into ER membrane"/>
    <property type="evidence" value="ECO:0007669"/>
    <property type="project" value="InterPro"/>
</dbReference>
<dbReference type="FunFam" id="1.10.287.660:FF:000006">
    <property type="entry name" value="Protein GET1"/>
    <property type="match status" value="1"/>
</dbReference>
<dbReference type="Gene3D" id="1.10.287.660">
    <property type="entry name" value="Helix hairpin bin"/>
    <property type="match status" value="1"/>
</dbReference>
<dbReference type="HAMAP" id="MF_03113">
    <property type="entry name" value="Get1"/>
    <property type="match status" value="1"/>
</dbReference>
<dbReference type="InterPro" id="IPR028945">
    <property type="entry name" value="Get1"/>
</dbReference>
<dbReference type="InterPro" id="IPR027538">
    <property type="entry name" value="Get1_fungi"/>
</dbReference>
<dbReference type="InterPro" id="IPR029012">
    <property type="entry name" value="Helix_hairpin_bin_sf"/>
</dbReference>
<dbReference type="PANTHER" id="PTHR42650:SF1">
    <property type="entry name" value="GUIDED ENTRY OF TAIL-ANCHORED PROTEINS FACTOR 1"/>
    <property type="match status" value="1"/>
</dbReference>
<dbReference type="PANTHER" id="PTHR42650">
    <property type="entry name" value="TAIL-ANCHORED PROTEIN INSERTION RECEPTOR WRB"/>
    <property type="match status" value="1"/>
</dbReference>
<dbReference type="Pfam" id="PF04420">
    <property type="entry name" value="CHD5"/>
    <property type="match status" value="1"/>
</dbReference>
<accession>Q2UG70</accession>